<keyword id="KW-0963">Cytoplasm</keyword>
<keyword id="KW-0255">Endonuclease</keyword>
<keyword id="KW-0378">Hydrolase</keyword>
<keyword id="KW-0479">Metal-binding</keyword>
<keyword id="KW-0540">Nuclease</keyword>
<keyword id="KW-0690">Ribosome biogenesis</keyword>
<keyword id="KW-0698">rRNA processing</keyword>
<keyword id="KW-0862">Zinc</keyword>
<gene>
    <name evidence="1" type="primary">ybeY</name>
    <name type="ordered locus">BCAH820_4325</name>
</gene>
<protein>
    <recommendedName>
        <fullName evidence="1">Endoribonuclease YbeY</fullName>
        <ecNumber evidence="1">3.1.-.-</ecNumber>
    </recommendedName>
</protein>
<organism>
    <name type="scientific">Bacillus cereus (strain AH820)</name>
    <dbReference type="NCBI Taxonomy" id="405535"/>
    <lineage>
        <taxon>Bacteria</taxon>
        <taxon>Bacillati</taxon>
        <taxon>Bacillota</taxon>
        <taxon>Bacilli</taxon>
        <taxon>Bacillales</taxon>
        <taxon>Bacillaceae</taxon>
        <taxon>Bacillus</taxon>
        <taxon>Bacillus cereus group</taxon>
    </lineage>
</organism>
<sequence>MSLLIDFIDETEEVKEEYVNLIREILGKAAQMEKIEDGAELSVTFVDNERIREINRDYRDKDQPTDVISFAMEEMGEGEMEIVGVEMPRMLGDLIISIPRAKEQAEEYGHSFDRELGFLALHGFLHLLGYDHMTEEDEKEMFGRQKEILEAFGLGR</sequence>
<name>YBEY_BACC0</name>
<reference key="1">
    <citation type="submission" date="2008-10" db="EMBL/GenBank/DDBJ databases">
        <title>Genome sequence of Bacillus cereus AH820.</title>
        <authorList>
            <person name="Dodson R.J."/>
            <person name="Durkin A.S."/>
            <person name="Rosovitz M.J."/>
            <person name="Rasko D.A."/>
            <person name="Hoffmaster A."/>
            <person name="Ravel J."/>
            <person name="Sutton G."/>
        </authorList>
    </citation>
    <scope>NUCLEOTIDE SEQUENCE [LARGE SCALE GENOMIC DNA]</scope>
    <source>
        <strain>AH820</strain>
    </source>
</reference>
<comment type="function">
    <text evidence="1">Single strand-specific metallo-endoribonuclease involved in late-stage 70S ribosome quality control and in maturation of the 3' terminus of the 16S rRNA.</text>
</comment>
<comment type="cofactor">
    <cofactor evidence="1">
        <name>Zn(2+)</name>
        <dbReference type="ChEBI" id="CHEBI:29105"/>
    </cofactor>
    <text evidence="1">Binds 1 zinc ion.</text>
</comment>
<comment type="subcellular location">
    <subcellularLocation>
        <location evidence="1">Cytoplasm</location>
    </subcellularLocation>
</comment>
<comment type="similarity">
    <text evidence="1">Belongs to the endoribonuclease YbeY family.</text>
</comment>
<feature type="chain" id="PRO_1000199950" description="Endoribonuclease YbeY">
    <location>
        <begin position="1"/>
        <end position="156"/>
    </location>
</feature>
<feature type="binding site" evidence="1">
    <location>
        <position position="122"/>
    </location>
    <ligand>
        <name>Zn(2+)</name>
        <dbReference type="ChEBI" id="CHEBI:29105"/>
        <note>catalytic</note>
    </ligand>
</feature>
<feature type="binding site" evidence="1">
    <location>
        <position position="126"/>
    </location>
    <ligand>
        <name>Zn(2+)</name>
        <dbReference type="ChEBI" id="CHEBI:29105"/>
        <note>catalytic</note>
    </ligand>
</feature>
<feature type="binding site" evidence="1">
    <location>
        <position position="132"/>
    </location>
    <ligand>
        <name>Zn(2+)</name>
        <dbReference type="ChEBI" id="CHEBI:29105"/>
        <note>catalytic</note>
    </ligand>
</feature>
<evidence type="ECO:0000255" key="1">
    <source>
        <dbReference type="HAMAP-Rule" id="MF_00009"/>
    </source>
</evidence>
<accession>B7JN28</accession>
<proteinExistence type="inferred from homology"/>
<dbReference type="EC" id="3.1.-.-" evidence="1"/>
<dbReference type="EMBL" id="CP001283">
    <property type="protein sequence ID" value="ACK89893.1"/>
    <property type="molecule type" value="Genomic_DNA"/>
</dbReference>
<dbReference type="RefSeq" id="WP_000054692.1">
    <property type="nucleotide sequence ID" value="NC_011773.1"/>
</dbReference>
<dbReference type="SMR" id="B7JN28"/>
<dbReference type="GeneID" id="93006797"/>
<dbReference type="KEGG" id="bcu:BCAH820_4325"/>
<dbReference type="HOGENOM" id="CLU_106710_3_0_9"/>
<dbReference type="Proteomes" id="UP000001363">
    <property type="component" value="Chromosome"/>
</dbReference>
<dbReference type="GO" id="GO:0005737">
    <property type="term" value="C:cytoplasm"/>
    <property type="evidence" value="ECO:0007669"/>
    <property type="project" value="UniProtKB-SubCell"/>
</dbReference>
<dbReference type="GO" id="GO:0004222">
    <property type="term" value="F:metalloendopeptidase activity"/>
    <property type="evidence" value="ECO:0007669"/>
    <property type="project" value="InterPro"/>
</dbReference>
<dbReference type="GO" id="GO:0004521">
    <property type="term" value="F:RNA endonuclease activity"/>
    <property type="evidence" value="ECO:0007669"/>
    <property type="project" value="UniProtKB-UniRule"/>
</dbReference>
<dbReference type="GO" id="GO:0008270">
    <property type="term" value="F:zinc ion binding"/>
    <property type="evidence" value="ECO:0007669"/>
    <property type="project" value="UniProtKB-UniRule"/>
</dbReference>
<dbReference type="GO" id="GO:0006364">
    <property type="term" value="P:rRNA processing"/>
    <property type="evidence" value="ECO:0007669"/>
    <property type="project" value="UniProtKB-UniRule"/>
</dbReference>
<dbReference type="Gene3D" id="3.40.390.30">
    <property type="entry name" value="Metalloproteases ('zincins'), catalytic domain"/>
    <property type="match status" value="1"/>
</dbReference>
<dbReference type="HAMAP" id="MF_00009">
    <property type="entry name" value="Endoribonucl_YbeY"/>
    <property type="match status" value="1"/>
</dbReference>
<dbReference type="InterPro" id="IPR023091">
    <property type="entry name" value="MetalPrtase_cat_dom_sf_prd"/>
</dbReference>
<dbReference type="InterPro" id="IPR002036">
    <property type="entry name" value="YbeY"/>
</dbReference>
<dbReference type="InterPro" id="IPR020549">
    <property type="entry name" value="YbeY_CS"/>
</dbReference>
<dbReference type="NCBIfam" id="TIGR00043">
    <property type="entry name" value="rRNA maturation RNase YbeY"/>
    <property type="match status" value="1"/>
</dbReference>
<dbReference type="PANTHER" id="PTHR46986">
    <property type="entry name" value="ENDORIBONUCLEASE YBEY, CHLOROPLASTIC"/>
    <property type="match status" value="1"/>
</dbReference>
<dbReference type="PANTHER" id="PTHR46986:SF1">
    <property type="entry name" value="ENDORIBONUCLEASE YBEY, CHLOROPLASTIC"/>
    <property type="match status" value="1"/>
</dbReference>
<dbReference type="Pfam" id="PF02130">
    <property type="entry name" value="YbeY"/>
    <property type="match status" value="1"/>
</dbReference>
<dbReference type="SUPFAM" id="SSF55486">
    <property type="entry name" value="Metalloproteases ('zincins'), catalytic domain"/>
    <property type="match status" value="1"/>
</dbReference>
<dbReference type="PROSITE" id="PS01306">
    <property type="entry name" value="UPF0054"/>
    <property type="match status" value="1"/>
</dbReference>